<organism>
    <name type="scientific">Lactiplantibacillus plantarum (strain ATCC BAA-793 / NCIMB 8826 / WCFS1)</name>
    <name type="common">Lactobacillus plantarum</name>
    <dbReference type="NCBI Taxonomy" id="220668"/>
    <lineage>
        <taxon>Bacteria</taxon>
        <taxon>Bacillati</taxon>
        <taxon>Bacillota</taxon>
        <taxon>Bacilli</taxon>
        <taxon>Lactobacillales</taxon>
        <taxon>Lactobacillaceae</taxon>
        <taxon>Lactiplantibacillus</taxon>
    </lineage>
</organism>
<name>PYRG_LACPL</name>
<evidence type="ECO:0000255" key="1">
    <source>
        <dbReference type="HAMAP-Rule" id="MF_01227"/>
    </source>
</evidence>
<reference key="1">
    <citation type="journal article" date="2003" name="Proc. Natl. Acad. Sci. U.S.A.">
        <title>Complete genome sequence of Lactobacillus plantarum WCFS1.</title>
        <authorList>
            <person name="Kleerebezem M."/>
            <person name="Boekhorst J."/>
            <person name="van Kranenburg R."/>
            <person name="Molenaar D."/>
            <person name="Kuipers O.P."/>
            <person name="Leer R."/>
            <person name="Tarchini R."/>
            <person name="Peters S.A."/>
            <person name="Sandbrink H.M."/>
            <person name="Fiers M.W.E.J."/>
            <person name="Stiekema W."/>
            <person name="Klein Lankhorst R.M."/>
            <person name="Bron P.A."/>
            <person name="Hoffer S.M."/>
            <person name="Nierop Groot M.N."/>
            <person name="Kerkhoven R."/>
            <person name="De Vries M."/>
            <person name="Ursing B."/>
            <person name="De Vos W.M."/>
            <person name="Siezen R.J."/>
        </authorList>
    </citation>
    <scope>NUCLEOTIDE SEQUENCE [LARGE SCALE GENOMIC DNA]</scope>
    <source>
        <strain>ATCC BAA-793 / NCIMB 8826 / WCFS1</strain>
    </source>
</reference>
<reference key="2">
    <citation type="journal article" date="2012" name="J. Bacteriol.">
        <title>Complete resequencing and reannotation of the Lactobacillus plantarum WCFS1 genome.</title>
        <authorList>
            <person name="Siezen R.J."/>
            <person name="Francke C."/>
            <person name="Renckens B."/>
            <person name="Boekhorst J."/>
            <person name="Wels M."/>
            <person name="Kleerebezem M."/>
            <person name="van Hijum S.A."/>
        </authorList>
    </citation>
    <scope>NUCLEOTIDE SEQUENCE [LARGE SCALE GENOMIC DNA]</scope>
    <scope>GENOME REANNOTATION</scope>
    <source>
        <strain>ATCC BAA-793 / NCIMB 8826 / WCFS1</strain>
    </source>
</reference>
<accession>Q88Z76</accession>
<accession>F9UKW3</accession>
<comment type="function">
    <text evidence="1">Catalyzes the ATP-dependent amination of UTP to CTP with either L-glutamine or ammonia as the source of nitrogen. Regulates intracellular CTP levels through interactions with the four ribonucleotide triphosphates.</text>
</comment>
<comment type="catalytic activity">
    <reaction evidence="1">
        <text>UTP + L-glutamine + ATP + H2O = CTP + L-glutamate + ADP + phosphate + 2 H(+)</text>
        <dbReference type="Rhea" id="RHEA:26426"/>
        <dbReference type="ChEBI" id="CHEBI:15377"/>
        <dbReference type="ChEBI" id="CHEBI:15378"/>
        <dbReference type="ChEBI" id="CHEBI:29985"/>
        <dbReference type="ChEBI" id="CHEBI:30616"/>
        <dbReference type="ChEBI" id="CHEBI:37563"/>
        <dbReference type="ChEBI" id="CHEBI:43474"/>
        <dbReference type="ChEBI" id="CHEBI:46398"/>
        <dbReference type="ChEBI" id="CHEBI:58359"/>
        <dbReference type="ChEBI" id="CHEBI:456216"/>
        <dbReference type="EC" id="6.3.4.2"/>
    </reaction>
</comment>
<comment type="catalytic activity">
    <reaction evidence="1">
        <text>L-glutamine + H2O = L-glutamate + NH4(+)</text>
        <dbReference type="Rhea" id="RHEA:15889"/>
        <dbReference type="ChEBI" id="CHEBI:15377"/>
        <dbReference type="ChEBI" id="CHEBI:28938"/>
        <dbReference type="ChEBI" id="CHEBI:29985"/>
        <dbReference type="ChEBI" id="CHEBI:58359"/>
    </reaction>
</comment>
<comment type="catalytic activity">
    <reaction evidence="1">
        <text>UTP + NH4(+) + ATP = CTP + ADP + phosphate + 2 H(+)</text>
        <dbReference type="Rhea" id="RHEA:16597"/>
        <dbReference type="ChEBI" id="CHEBI:15378"/>
        <dbReference type="ChEBI" id="CHEBI:28938"/>
        <dbReference type="ChEBI" id="CHEBI:30616"/>
        <dbReference type="ChEBI" id="CHEBI:37563"/>
        <dbReference type="ChEBI" id="CHEBI:43474"/>
        <dbReference type="ChEBI" id="CHEBI:46398"/>
        <dbReference type="ChEBI" id="CHEBI:456216"/>
    </reaction>
</comment>
<comment type="activity regulation">
    <text evidence="1">Allosterically activated by GTP, when glutamine is the substrate; GTP has no effect on the reaction when ammonia is the substrate. The allosteric effector GTP functions by stabilizing the protein conformation that binds the tetrahedral intermediate(s) formed during glutamine hydrolysis. Inhibited by the product CTP, via allosteric rather than competitive inhibition.</text>
</comment>
<comment type="pathway">
    <text evidence="1">Pyrimidine metabolism; CTP biosynthesis via de novo pathway; CTP from UDP: step 2/2.</text>
</comment>
<comment type="subunit">
    <text evidence="1">Homotetramer.</text>
</comment>
<comment type="miscellaneous">
    <text evidence="1">CTPSs have evolved a hybrid strategy for distinguishing between UTP and CTP. The overlapping regions of the product feedback inhibitory and substrate sites recognize a common feature in both compounds, the triphosphate moiety. To differentiate isosteric substrate and product pyrimidine rings, an additional pocket far from the expected kinase/ligase catalytic site, specifically recognizes the cytosine and ribose portions of the product inhibitor.</text>
</comment>
<comment type="similarity">
    <text evidence="1">Belongs to the CTP synthase family.</text>
</comment>
<feature type="chain" id="PRO_0000138193" description="CTP synthase">
    <location>
        <begin position="1"/>
        <end position="537"/>
    </location>
</feature>
<feature type="domain" description="Glutamine amidotransferase type-1" evidence="1">
    <location>
        <begin position="292"/>
        <end position="535"/>
    </location>
</feature>
<feature type="region of interest" description="Amidoligase domain" evidence="1">
    <location>
        <begin position="1"/>
        <end position="267"/>
    </location>
</feature>
<feature type="active site" description="Nucleophile; for glutamine hydrolysis" evidence="1">
    <location>
        <position position="381"/>
    </location>
</feature>
<feature type="active site" evidence="1">
    <location>
        <position position="508"/>
    </location>
</feature>
<feature type="active site" evidence="1">
    <location>
        <position position="510"/>
    </location>
</feature>
<feature type="binding site" evidence="1">
    <location>
        <position position="13"/>
    </location>
    <ligand>
        <name>CTP</name>
        <dbReference type="ChEBI" id="CHEBI:37563"/>
        <note>allosteric inhibitor</note>
    </ligand>
</feature>
<feature type="binding site" evidence="1">
    <location>
        <position position="13"/>
    </location>
    <ligand>
        <name>UTP</name>
        <dbReference type="ChEBI" id="CHEBI:46398"/>
    </ligand>
</feature>
<feature type="binding site" evidence="1">
    <location>
        <begin position="14"/>
        <end position="19"/>
    </location>
    <ligand>
        <name>ATP</name>
        <dbReference type="ChEBI" id="CHEBI:30616"/>
    </ligand>
</feature>
<feature type="binding site" evidence="1">
    <location>
        <position position="54"/>
    </location>
    <ligand>
        <name>L-glutamine</name>
        <dbReference type="ChEBI" id="CHEBI:58359"/>
    </ligand>
</feature>
<feature type="binding site" evidence="1">
    <location>
        <position position="71"/>
    </location>
    <ligand>
        <name>ATP</name>
        <dbReference type="ChEBI" id="CHEBI:30616"/>
    </ligand>
</feature>
<feature type="binding site" evidence="1">
    <location>
        <position position="71"/>
    </location>
    <ligand>
        <name>Mg(2+)</name>
        <dbReference type="ChEBI" id="CHEBI:18420"/>
    </ligand>
</feature>
<feature type="binding site" evidence="1">
    <location>
        <position position="141"/>
    </location>
    <ligand>
        <name>Mg(2+)</name>
        <dbReference type="ChEBI" id="CHEBI:18420"/>
    </ligand>
</feature>
<feature type="binding site" evidence="1">
    <location>
        <begin position="148"/>
        <end position="150"/>
    </location>
    <ligand>
        <name>CTP</name>
        <dbReference type="ChEBI" id="CHEBI:37563"/>
        <note>allosteric inhibitor</note>
    </ligand>
</feature>
<feature type="binding site" evidence="1">
    <location>
        <begin position="188"/>
        <end position="193"/>
    </location>
    <ligand>
        <name>CTP</name>
        <dbReference type="ChEBI" id="CHEBI:37563"/>
        <note>allosteric inhibitor</note>
    </ligand>
</feature>
<feature type="binding site" evidence="1">
    <location>
        <begin position="188"/>
        <end position="193"/>
    </location>
    <ligand>
        <name>UTP</name>
        <dbReference type="ChEBI" id="CHEBI:46398"/>
    </ligand>
</feature>
<feature type="binding site" evidence="1">
    <location>
        <position position="224"/>
    </location>
    <ligand>
        <name>CTP</name>
        <dbReference type="ChEBI" id="CHEBI:37563"/>
        <note>allosteric inhibitor</note>
    </ligand>
</feature>
<feature type="binding site" evidence="1">
    <location>
        <position position="224"/>
    </location>
    <ligand>
        <name>UTP</name>
        <dbReference type="ChEBI" id="CHEBI:46398"/>
    </ligand>
</feature>
<feature type="binding site" evidence="1">
    <location>
        <position position="354"/>
    </location>
    <ligand>
        <name>L-glutamine</name>
        <dbReference type="ChEBI" id="CHEBI:58359"/>
    </ligand>
</feature>
<feature type="binding site" evidence="1">
    <location>
        <begin position="382"/>
        <end position="385"/>
    </location>
    <ligand>
        <name>L-glutamine</name>
        <dbReference type="ChEBI" id="CHEBI:58359"/>
    </ligand>
</feature>
<feature type="binding site" evidence="1">
    <location>
        <position position="405"/>
    </location>
    <ligand>
        <name>L-glutamine</name>
        <dbReference type="ChEBI" id="CHEBI:58359"/>
    </ligand>
</feature>
<feature type="binding site" evidence="1">
    <location>
        <position position="463"/>
    </location>
    <ligand>
        <name>L-glutamine</name>
        <dbReference type="ChEBI" id="CHEBI:58359"/>
    </ligand>
</feature>
<proteinExistence type="inferred from homology"/>
<keyword id="KW-0067">ATP-binding</keyword>
<keyword id="KW-0315">Glutamine amidotransferase</keyword>
<keyword id="KW-0436">Ligase</keyword>
<keyword id="KW-0460">Magnesium</keyword>
<keyword id="KW-0479">Metal-binding</keyword>
<keyword id="KW-0547">Nucleotide-binding</keyword>
<keyword id="KW-0665">Pyrimidine biosynthesis</keyword>
<keyword id="KW-1185">Reference proteome</keyword>
<gene>
    <name evidence="1" type="primary">pyrG</name>
    <name type="ordered locus">lp_0481</name>
</gene>
<dbReference type="EC" id="6.3.4.2" evidence="1"/>
<dbReference type="EMBL" id="AL935263">
    <property type="protein sequence ID" value="CCC77978.1"/>
    <property type="molecule type" value="Genomic_DNA"/>
</dbReference>
<dbReference type="RefSeq" id="WP_003642042.1">
    <property type="nucleotide sequence ID" value="NC_004567.2"/>
</dbReference>
<dbReference type="RefSeq" id="YP_004888492.1">
    <property type="nucleotide sequence ID" value="NC_004567.2"/>
</dbReference>
<dbReference type="SMR" id="Q88Z76"/>
<dbReference type="STRING" id="220668.lp_0481"/>
<dbReference type="EnsemblBacteria" id="CCC77978">
    <property type="protein sequence ID" value="CCC77978"/>
    <property type="gene ID" value="lp_0481"/>
</dbReference>
<dbReference type="KEGG" id="lpl:lp_0481"/>
<dbReference type="PATRIC" id="fig|220668.9.peg.395"/>
<dbReference type="eggNOG" id="COG0504">
    <property type="taxonomic scope" value="Bacteria"/>
</dbReference>
<dbReference type="HOGENOM" id="CLU_011675_5_0_9"/>
<dbReference type="OrthoDB" id="9801107at2"/>
<dbReference type="PhylomeDB" id="Q88Z76"/>
<dbReference type="UniPathway" id="UPA00159">
    <property type="reaction ID" value="UER00277"/>
</dbReference>
<dbReference type="Proteomes" id="UP000000432">
    <property type="component" value="Chromosome"/>
</dbReference>
<dbReference type="GO" id="GO:0005829">
    <property type="term" value="C:cytosol"/>
    <property type="evidence" value="ECO:0007669"/>
    <property type="project" value="TreeGrafter"/>
</dbReference>
<dbReference type="GO" id="GO:0005524">
    <property type="term" value="F:ATP binding"/>
    <property type="evidence" value="ECO:0007669"/>
    <property type="project" value="UniProtKB-KW"/>
</dbReference>
<dbReference type="GO" id="GO:0003883">
    <property type="term" value="F:CTP synthase activity"/>
    <property type="evidence" value="ECO:0007669"/>
    <property type="project" value="UniProtKB-UniRule"/>
</dbReference>
<dbReference type="GO" id="GO:0004359">
    <property type="term" value="F:glutaminase activity"/>
    <property type="evidence" value="ECO:0007669"/>
    <property type="project" value="RHEA"/>
</dbReference>
<dbReference type="GO" id="GO:0042802">
    <property type="term" value="F:identical protein binding"/>
    <property type="evidence" value="ECO:0007669"/>
    <property type="project" value="TreeGrafter"/>
</dbReference>
<dbReference type="GO" id="GO:0046872">
    <property type="term" value="F:metal ion binding"/>
    <property type="evidence" value="ECO:0007669"/>
    <property type="project" value="UniProtKB-KW"/>
</dbReference>
<dbReference type="GO" id="GO:0044210">
    <property type="term" value="P:'de novo' CTP biosynthetic process"/>
    <property type="evidence" value="ECO:0007669"/>
    <property type="project" value="UniProtKB-UniRule"/>
</dbReference>
<dbReference type="GO" id="GO:0019856">
    <property type="term" value="P:pyrimidine nucleobase biosynthetic process"/>
    <property type="evidence" value="ECO:0007669"/>
    <property type="project" value="TreeGrafter"/>
</dbReference>
<dbReference type="CDD" id="cd03113">
    <property type="entry name" value="CTPS_N"/>
    <property type="match status" value="1"/>
</dbReference>
<dbReference type="CDD" id="cd01746">
    <property type="entry name" value="GATase1_CTP_Synthase"/>
    <property type="match status" value="1"/>
</dbReference>
<dbReference type="FunFam" id="3.40.50.300:FF:000009">
    <property type="entry name" value="CTP synthase"/>
    <property type="match status" value="1"/>
</dbReference>
<dbReference type="FunFam" id="3.40.50.880:FF:000002">
    <property type="entry name" value="CTP synthase"/>
    <property type="match status" value="1"/>
</dbReference>
<dbReference type="Gene3D" id="3.40.50.880">
    <property type="match status" value="1"/>
</dbReference>
<dbReference type="Gene3D" id="3.40.50.300">
    <property type="entry name" value="P-loop containing nucleotide triphosphate hydrolases"/>
    <property type="match status" value="1"/>
</dbReference>
<dbReference type="HAMAP" id="MF_01227">
    <property type="entry name" value="PyrG"/>
    <property type="match status" value="1"/>
</dbReference>
<dbReference type="InterPro" id="IPR029062">
    <property type="entry name" value="Class_I_gatase-like"/>
</dbReference>
<dbReference type="InterPro" id="IPR004468">
    <property type="entry name" value="CTP_synthase"/>
</dbReference>
<dbReference type="InterPro" id="IPR017456">
    <property type="entry name" value="CTP_synthase_N"/>
</dbReference>
<dbReference type="InterPro" id="IPR017926">
    <property type="entry name" value="GATASE"/>
</dbReference>
<dbReference type="InterPro" id="IPR033828">
    <property type="entry name" value="GATase1_CTP_Synthase"/>
</dbReference>
<dbReference type="InterPro" id="IPR027417">
    <property type="entry name" value="P-loop_NTPase"/>
</dbReference>
<dbReference type="NCBIfam" id="NF003792">
    <property type="entry name" value="PRK05380.1"/>
    <property type="match status" value="1"/>
</dbReference>
<dbReference type="NCBIfam" id="TIGR00337">
    <property type="entry name" value="PyrG"/>
    <property type="match status" value="1"/>
</dbReference>
<dbReference type="PANTHER" id="PTHR11550">
    <property type="entry name" value="CTP SYNTHASE"/>
    <property type="match status" value="1"/>
</dbReference>
<dbReference type="PANTHER" id="PTHR11550:SF0">
    <property type="entry name" value="CTP SYNTHASE-RELATED"/>
    <property type="match status" value="1"/>
</dbReference>
<dbReference type="Pfam" id="PF06418">
    <property type="entry name" value="CTP_synth_N"/>
    <property type="match status" value="1"/>
</dbReference>
<dbReference type="Pfam" id="PF00117">
    <property type="entry name" value="GATase"/>
    <property type="match status" value="1"/>
</dbReference>
<dbReference type="SUPFAM" id="SSF52317">
    <property type="entry name" value="Class I glutamine amidotransferase-like"/>
    <property type="match status" value="1"/>
</dbReference>
<dbReference type="SUPFAM" id="SSF52540">
    <property type="entry name" value="P-loop containing nucleoside triphosphate hydrolases"/>
    <property type="match status" value="1"/>
</dbReference>
<dbReference type="PROSITE" id="PS51273">
    <property type="entry name" value="GATASE_TYPE_1"/>
    <property type="match status" value="1"/>
</dbReference>
<sequence length="537" mass="59736">MTKYIFVTGGVVSSIGKGIVAASLGRLLKNRGLKVTIQKFDPYINVDPGTMSPYQHGEVFVTDDGTETDLDLGHYERFIDINLNKYSNVTTGKIYSEVLQKERRGDYLGATVQVIPHITNAIKEKIMRAGTTTDSDIVITEIGGTVGDIESLPFIEALRQMKSDLGSDNVFYIHTTLIPYLRAAGEMKTKPTQHSVKELRSYGIQPNMLVVRTEQPITREMRNKIASFCDVEPEAVIESLDVKTIYSIPLNVQKQNMDQIVLDHFDVQAPKADMSEWIDLEHHVQNLSRTIKIALVGKYVALQDAYISVTEALKHAGYTDDADIDLKKISAEDVTPENVEELLGDADGILVPGGFGDRGIEGKITAIKYARENDVPFLGICLGMQMASVEFARNVLGLKDANSAEIDPKTPDNIIDLMADQEDVEDMGGTQRLGAYPCKLKPGTVAAKAYHNEEVVMERHRHRYEFNNKYREAMAAKGMVFSGTSPDNRLVEVIELPKKRFFVASQYHPEFLSRPNRPEGLFKAFIDAANQTGKVKA</sequence>
<protein>
    <recommendedName>
        <fullName evidence="1">CTP synthase</fullName>
        <ecNumber evidence="1">6.3.4.2</ecNumber>
    </recommendedName>
    <alternativeName>
        <fullName evidence="1">Cytidine 5'-triphosphate synthase</fullName>
    </alternativeName>
    <alternativeName>
        <fullName evidence="1">Cytidine triphosphate synthetase</fullName>
        <shortName evidence="1">CTP synthetase</shortName>
        <shortName evidence="1">CTPS</shortName>
    </alternativeName>
    <alternativeName>
        <fullName evidence="1">UTP--ammonia ligase</fullName>
    </alternativeName>
</protein>